<reference evidence="3" key="1">
    <citation type="journal article" date="2004" name="Rapid Commun. Mass Spectrom.">
        <title>Host-defence skin peptides of the Australian common froglet Crinia signifera: sequence determination using positive and negative ion electrospray mass spectra.</title>
        <authorList>
            <person name="Maselli V.M."/>
            <person name="Brinkworth C.S."/>
            <person name="Bowie J.H."/>
            <person name="Tyler M.J."/>
        </authorList>
    </citation>
    <scope>PROTEIN SEQUENCE</scope>
    <scope>SUBCELLULAR LOCATION</scope>
    <scope>TISSUE SPECIFICITY</scope>
    <scope>AMIDATION AT SER-15</scope>
    <source>
        <tissue evidence="2">Skin secretion</tissue>
    </source>
</reference>
<reference evidence="3" key="2">
    <citation type="journal article" date="2008" name="Regul. Pept.">
        <title>Disulfide-containing peptides from the glandular skin secretions of froglets of the genus Crinia: structure, activity and evolutionary trends.</title>
        <authorList>
            <person name="Jackway R.J."/>
            <person name="Pukala T.L."/>
            <person name="Maselli V.M."/>
            <person name="Musgrave I.F."/>
            <person name="Bowie J.H."/>
            <person name="Liu Y."/>
            <person name="Surinya-Johnson K.H."/>
            <person name="Donnellan S.C."/>
            <person name="Doyle J.R."/>
            <person name="Llewellyn L.E."/>
            <person name="Tyler M.J."/>
        </authorList>
    </citation>
    <scope>DISCUSSION OF SEQUENCE</scope>
</reference>
<accession>P86133</accession>
<evidence type="ECO:0000250" key="1">
    <source>
        <dbReference type="UniProtKB" id="P86134"/>
    </source>
</evidence>
<evidence type="ECO:0000269" key="2">
    <source>
    </source>
</evidence>
<evidence type="ECO:0000305" key="3"/>
<name>SIG41_CRISI</name>
<keyword id="KW-0027">Amidation</keyword>
<keyword id="KW-0878">Amphibian defense peptide</keyword>
<keyword id="KW-0903">Direct protein sequencing</keyword>
<keyword id="KW-0964">Secreted</keyword>
<organism>
    <name type="scientific">Crinia signifera</name>
    <name type="common">Common eastern froglet</name>
    <dbReference type="NCBI Taxonomy" id="326986"/>
    <lineage>
        <taxon>Eukaryota</taxon>
        <taxon>Metazoa</taxon>
        <taxon>Chordata</taxon>
        <taxon>Craniata</taxon>
        <taxon>Vertebrata</taxon>
        <taxon>Euteleostomi</taxon>
        <taxon>Amphibia</taxon>
        <taxon>Batrachia</taxon>
        <taxon>Anura</taxon>
        <taxon>Neobatrachia</taxon>
        <taxon>Myobatrachoidea</taxon>
        <taxon>Myobatrachidae</taxon>
        <taxon>Myobatrachinae</taxon>
        <taxon>Crinia</taxon>
    </lineage>
</organism>
<feature type="peptide" id="PRO_0000371744" description="Signiferin-4.1">
    <location>
        <begin position="1"/>
        <end position="15"/>
    </location>
</feature>
<feature type="modified residue" description="Serine amide" evidence="2">
    <location>
        <position position="15"/>
    </location>
</feature>
<sequence length="15" mass="1580">GFADLFGKVANLIKS</sequence>
<comment type="function">
    <text evidence="1">Inhibits the formation of NO by neuronal nitric oxide synthase.</text>
</comment>
<comment type="subcellular location">
    <subcellularLocation>
        <location evidence="2">Secreted</location>
    </subcellularLocation>
</comment>
<comment type="tissue specificity">
    <text evidence="2">Expressed by the skin glands.</text>
</comment>
<proteinExistence type="evidence at protein level"/>
<protein>
    <recommendedName>
        <fullName>Signiferin-4.1</fullName>
    </recommendedName>
</protein>
<dbReference type="GO" id="GO:0005576">
    <property type="term" value="C:extracellular region"/>
    <property type="evidence" value="ECO:0000314"/>
    <property type="project" value="UniProtKB"/>
</dbReference>
<dbReference type="GO" id="GO:0006952">
    <property type="term" value="P:defense response"/>
    <property type="evidence" value="ECO:0007669"/>
    <property type="project" value="UniProtKB-KW"/>
</dbReference>
<dbReference type="GO" id="GO:0051001">
    <property type="term" value="P:negative regulation of nitric-oxide synthase activity"/>
    <property type="evidence" value="ECO:0000250"/>
    <property type="project" value="UniProtKB"/>
</dbReference>